<name>3HIDH_DROME</name>
<protein>
    <recommendedName>
        <fullName evidence="3">3-hydroxyisobutyrate dehydrogenase, mitochondrial</fullName>
        <ecNumber>1.1.1.31</ecNumber>
    </recommendedName>
</protein>
<sequence>MSLRVMSPAMLNAWSQTLVRAMSTQGGAKNIGFVGLGNMGANMASNLIKAGHKLHVFDISKPACDGLAAKGATVYAKTSELAKNSDFVITMLPNNAIVDASYDEMTADGVNKDTIFIDSSTISPDLVKSLQKKISAKGARFIDAPVSGGVPGAEQATLTFMVGGTEAEYNAVKAVLECMGKKITHCGVYGMGQAAKLCNNMMLAISMIGVSEAMNLAVRQGLDANVFAEIINSSTGRCWASEIYNPVPGVCPSAPANRDYAGGFSSALITKDLGLASGVANASNSPIPLGSLAHKVYQSLCDKGLGNKDFSVVYDLMKKEKFSV</sequence>
<dbReference type="EC" id="1.1.1.31"/>
<dbReference type="EMBL" id="AE013599">
    <property type="protein sequence ID" value="AAF57639.2"/>
    <property type="molecule type" value="Genomic_DNA"/>
</dbReference>
<dbReference type="EMBL" id="AE013599">
    <property type="protein sequence ID" value="ADV37218.1"/>
    <property type="molecule type" value="Genomic_DNA"/>
</dbReference>
<dbReference type="EMBL" id="AY069057">
    <property type="protein sequence ID" value="AAL39202.2"/>
    <property type="status" value="ALT_INIT"/>
    <property type="molecule type" value="mRNA"/>
</dbReference>
<dbReference type="RefSeq" id="NP_001188972.1">
    <property type="nucleotide sequence ID" value="NM_001202043.2"/>
</dbReference>
<dbReference type="RefSeq" id="NP_611373.1">
    <property type="nucleotide sequence ID" value="NM_137529.4"/>
</dbReference>
<dbReference type="RefSeq" id="NP_725824.1">
    <property type="nucleotide sequence ID" value="NM_166306.3"/>
</dbReference>
<dbReference type="SMR" id="Q9V8M5"/>
<dbReference type="BioGRID" id="62836">
    <property type="interactions" value="4"/>
</dbReference>
<dbReference type="DIP" id="DIP-22109N"/>
<dbReference type="FunCoup" id="Q9V8M5">
    <property type="interactions" value="1168"/>
</dbReference>
<dbReference type="IntAct" id="Q9V8M5">
    <property type="interactions" value="1"/>
</dbReference>
<dbReference type="STRING" id="7227.FBpp0085822"/>
<dbReference type="PaxDb" id="7227-FBpp0085821"/>
<dbReference type="PeptideAtlas" id="Q9V8M5"/>
<dbReference type="DNASU" id="37166"/>
<dbReference type="EnsemblMetazoa" id="FBtr0086639">
    <property type="protein sequence ID" value="FBpp0085821"/>
    <property type="gene ID" value="FBgn0034390"/>
</dbReference>
<dbReference type="EnsemblMetazoa" id="FBtr0086640">
    <property type="protein sequence ID" value="FBpp0085822"/>
    <property type="gene ID" value="FBgn0034390"/>
</dbReference>
<dbReference type="EnsemblMetazoa" id="FBtr0303846">
    <property type="protein sequence ID" value="FBpp0292854"/>
    <property type="gene ID" value="FBgn0034390"/>
</dbReference>
<dbReference type="GeneID" id="37166"/>
<dbReference type="KEGG" id="dme:Dmel_CG15093"/>
<dbReference type="UCSC" id="CG15093-RA">
    <property type="organism name" value="d. melanogaster"/>
</dbReference>
<dbReference type="AGR" id="FB:FBgn0034390"/>
<dbReference type="FlyBase" id="FBgn0034390">
    <property type="gene designation" value="Hibadh"/>
</dbReference>
<dbReference type="VEuPathDB" id="VectorBase:FBgn0034390"/>
<dbReference type="eggNOG" id="KOG0409">
    <property type="taxonomic scope" value="Eukaryota"/>
</dbReference>
<dbReference type="GeneTree" id="ENSGT00940000173744"/>
<dbReference type="HOGENOM" id="CLU_035117_6_0_1"/>
<dbReference type="InParanoid" id="Q9V8M5"/>
<dbReference type="OMA" id="MGKKVWH"/>
<dbReference type="OrthoDB" id="435038at2759"/>
<dbReference type="PhylomeDB" id="Q9V8M5"/>
<dbReference type="Reactome" id="R-DME-70895">
    <property type="pathway name" value="Branched-chain amino acid catabolism"/>
</dbReference>
<dbReference type="UniPathway" id="UPA00362"/>
<dbReference type="BioGRID-ORCS" id="37166">
    <property type="hits" value="0 hits in 1 CRISPR screen"/>
</dbReference>
<dbReference type="ChiTaRS" id="CG15093">
    <property type="organism name" value="fly"/>
</dbReference>
<dbReference type="GenomeRNAi" id="37166"/>
<dbReference type="PRO" id="PR:Q9V8M5"/>
<dbReference type="Proteomes" id="UP000000803">
    <property type="component" value="Chromosome 2R"/>
</dbReference>
<dbReference type="Bgee" id="FBgn0034390">
    <property type="expression patterns" value="Expressed in adult Malpighian tubule (Drosophila) and 114 other cell types or tissues"/>
</dbReference>
<dbReference type="ExpressionAtlas" id="Q9V8M5">
    <property type="expression patterns" value="baseline and differential"/>
</dbReference>
<dbReference type="GO" id="GO:0005739">
    <property type="term" value="C:mitochondrion"/>
    <property type="evidence" value="ECO:0007005"/>
    <property type="project" value="FlyBase"/>
</dbReference>
<dbReference type="GO" id="GO:0008442">
    <property type="term" value="F:3-hydroxyisobutyrate dehydrogenase activity"/>
    <property type="evidence" value="ECO:0000250"/>
    <property type="project" value="FlyBase"/>
</dbReference>
<dbReference type="GO" id="GO:0051287">
    <property type="term" value="F:NAD binding"/>
    <property type="evidence" value="ECO:0007669"/>
    <property type="project" value="InterPro"/>
</dbReference>
<dbReference type="GO" id="GO:0050661">
    <property type="term" value="F:NADP binding"/>
    <property type="evidence" value="ECO:0007669"/>
    <property type="project" value="InterPro"/>
</dbReference>
<dbReference type="GO" id="GO:0006574">
    <property type="term" value="P:valine catabolic process"/>
    <property type="evidence" value="ECO:0000250"/>
    <property type="project" value="FlyBase"/>
</dbReference>
<dbReference type="FunFam" id="1.10.1040.10:FF:000006">
    <property type="entry name" value="3-hydroxyisobutyrate dehydrogenase"/>
    <property type="match status" value="1"/>
</dbReference>
<dbReference type="FunFam" id="3.40.50.720:FF:000119">
    <property type="entry name" value="3-hydroxyisobutyrate dehydrogenase"/>
    <property type="match status" value="1"/>
</dbReference>
<dbReference type="Gene3D" id="1.10.1040.10">
    <property type="entry name" value="N-(1-d-carboxylethyl)-l-norvaline Dehydrogenase, domain 2"/>
    <property type="match status" value="1"/>
</dbReference>
<dbReference type="Gene3D" id="3.40.50.720">
    <property type="entry name" value="NAD(P)-binding Rossmann-like Domain"/>
    <property type="match status" value="1"/>
</dbReference>
<dbReference type="InterPro" id="IPR002204">
    <property type="entry name" value="3-OH-isobutyrate_DH-rel_CS"/>
</dbReference>
<dbReference type="InterPro" id="IPR008927">
    <property type="entry name" value="6-PGluconate_DH-like_C_sf"/>
</dbReference>
<dbReference type="InterPro" id="IPR013328">
    <property type="entry name" value="6PGD_dom2"/>
</dbReference>
<dbReference type="InterPro" id="IPR006115">
    <property type="entry name" value="6PGDH_NADP-bd"/>
</dbReference>
<dbReference type="InterPro" id="IPR011548">
    <property type="entry name" value="HIBADH"/>
</dbReference>
<dbReference type="InterPro" id="IPR029154">
    <property type="entry name" value="HIBADH-like_NADP-bd"/>
</dbReference>
<dbReference type="InterPro" id="IPR015815">
    <property type="entry name" value="HIBADH-related"/>
</dbReference>
<dbReference type="InterPro" id="IPR036291">
    <property type="entry name" value="NAD(P)-bd_dom_sf"/>
</dbReference>
<dbReference type="NCBIfam" id="TIGR01692">
    <property type="entry name" value="HIBADH"/>
    <property type="match status" value="1"/>
</dbReference>
<dbReference type="PANTHER" id="PTHR22981:SF7">
    <property type="entry name" value="3-HYDROXYISOBUTYRATE DEHYDROGENASE, MITOCHONDRIAL"/>
    <property type="match status" value="1"/>
</dbReference>
<dbReference type="PANTHER" id="PTHR22981">
    <property type="entry name" value="3-HYDROXYISOBUTYRATE DEHYDROGENASE-RELATED"/>
    <property type="match status" value="1"/>
</dbReference>
<dbReference type="Pfam" id="PF14833">
    <property type="entry name" value="NAD_binding_11"/>
    <property type="match status" value="1"/>
</dbReference>
<dbReference type="Pfam" id="PF03446">
    <property type="entry name" value="NAD_binding_2"/>
    <property type="match status" value="1"/>
</dbReference>
<dbReference type="PIRSF" id="PIRSF000103">
    <property type="entry name" value="HIBADH"/>
    <property type="match status" value="1"/>
</dbReference>
<dbReference type="SUPFAM" id="SSF48179">
    <property type="entry name" value="6-phosphogluconate dehydrogenase C-terminal domain-like"/>
    <property type="match status" value="1"/>
</dbReference>
<dbReference type="SUPFAM" id="SSF51735">
    <property type="entry name" value="NAD(P)-binding Rossmann-fold domains"/>
    <property type="match status" value="1"/>
</dbReference>
<dbReference type="PROSITE" id="PS00895">
    <property type="entry name" value="3_HYDROXYISOBUT_DH"/>
    <property type="match status" value="1"/>
</dbReference>
<feature type="transit peptide" description="Mitochondrion" evidence="1">
    <location>
        <begin position="1"/>
        <end position="25"/>
    </location>
</feature>
<feature type="chain" id="PRO_0000007161" description="3-hydroxyisobutyrate dehydrogenase, mitochondrial">
    <location>
        <begin position="26"/>
        <end position="324"/>
    </location>
</feature>
<feature type="active site" evidence="1">
    <location>
        <position position="196"/>
    </location>
</feature>
<feature type="binding site" evidence="1">
    <location>
        <begin position="29"/>
        <end position="58"/>
    </location>
    <ligand>
        <name>NAD(+)</name>
        <dbReference type="ChEBI" id="CHEBI:57540"/>
    </ligand>
</feature>
<feature type="binding site" evidence="1">
    <location>
        <begin position="92"/>
        <end position="93"/>
    </location>
    <ligand>
        <name>NAD(+)</name>
        <dbReference type="ChEBI" id="CHEBI:57540"/>
    </ligand>
</feature>
<feature type="binding site" evidence="1">
    <location>
        <position position="121"/>
    </location>
    <ligand>
        <name>NAD(+)</name>
        <dbReference type="ChEBI" id="CHEBI:57540"/>
    </ligand>
</feature>
<feature type="binding site" evidence="1">
    <location>
        <position position="271"/>
    </location>
    <ligand>
        <name>NAD(+)</name>
        <dbReference type="ChEBI" id="CHEBI:57540"/>
    </ligand>
</feature>
<reference key="1">
    <citation type="journal article" date="2000" name="Science">
        <title>The genome sequence of Drosophila melanogaster.</title>
        <authorList>
            <person name="Adams M.D."/>
            <person name="Celniker S.E."/>
            <person name="Holt R.A."/>
            <person name="Evans C.A."/>
            <person name="Gocayne J.D."/>
            <person name="Amanatides P.G."/>
            <person name="Scherer S.E."/>
            <person name="Li P.W."/>
            <person name="Hoskins R.A."/>
            <person name="Galle R.F."/>
            <person name="George R.A."/>
            <person name="Lewis S.E."/>
            <person name="Richards S."/>
            <person name="Ashburner M."/>
            <person name="Henderson S.N."/>
            <person name="Sutton G.G."/>
            <person name="Wortman J.R."/>
            <person name="Yandell M.D."/>
            <person name="Zhang Q."/>
            <person name="Chen L.X."/>
            <person name="Brandon R.C."/>
            <person name="Rogers Y.-H.C."/>
            <person name="Blazej R.G."/>
            <person name="Champe M."/>
            <person name="Pfeiffer B.D."/>
            <person name="Wan K.H."/>
            <person name="Doyle C."/>
            <person name="Baxter E.G."/>
            <person name="Helt G."/>
            <person name="Nelson C.R."/>
            <person name="Miklos G.L.G."/>
            <person name="Abril J.F."/>
            <person name="Agbayani A."/>
            <person name="An H.-J."/>
            <person name="Andrews-Pfannkoch C."/>
            <person name="Baldwin D."/>
            <person name="Ballew R.M."/>
            <person name="Basu A."/>
            <person name="Baxendale J."/>
            <person name="Bayraktaroglu L."/>
            <person name="Beasley E.M."/>
            <person name="Beeson K.Y."/>
            <person name="Benos P.V."/>
            <person name="Berman B.P."/>
            <person name="Bhandari D."/>
            <person name="Bolshakov S."/>
            <person name="Borkova D."/>
            <person name="Botchan M.R."/>
            <person name="Bouck J."/>
            <person name="Brokstein P."/>
            <person name="Brottier P."/>
            <person name="Burtis K.C."/>
            <person name="Busam D.A."/>
            <person name="Butler H."/>
            <person name="Cadieu E."/>
            <person name="Center A."/>
            <person name="Chandra I."/>
            <person name="Cherry J.M."/>
            <person name="Cawley S."/>
            <person name="Dahlke C."/>
            <person name="Davenport L.B."/>
            <person name="Davies P."/>
            <person name="de Pablos B."/>
            <person name="Delcher A."/>
            <person name="Deng Z."/>
            <person name="Mays A.D."/>
            <person name="Dew I."/>
            <person name="Dietz S.M."/>
            <person name="Dodson K."/>
            <person name="Doup L.E."/>
            <person name="Downes M."/>
            <person name="Dugan-Rocha S."/>
            <person name="Dunkov B.C."/>
            <person name="Dunn P."/>
            <person name="Durbin K.J."/>
            <person name="Evangelista C.C."/>
            <person name="Ferraz C."/>
            <person name="Ferriera S."/>
            <person name="Fleischmann W."/>
            <person name="Fosler C."/>
            <person name="Gabrielian A.E."/>
            <person name="Garg N.S."/>
            <person name="Gelbart W.M."/>
            <person name="Glasser K."/>
            <person name="Glodek A."/>
            <person name="Gong F."/>
            <person name="Gorrell J.H."/>
            <person name="Gu Z."/>
            <person name="Guan P."/>
            <person name="Harris M."/>
            <person name="Harris N.L."/>
            <person name="Harvey D.A."/>
            <person name="Heiman T.J."/>
            <person name="Hernandez J.R."/>
            <person name="Houck J."/>
            <person name="Hostin D."/>
            <person name="Houston K.A."/>
            <person name="Howland T.J."/>
            <person name="Wei M.-H."/>
            <person name="Ibegwam C."/>
            <person name="Jalali M."/>
            <person name="Kalush F."/>
            <person name="Karpen G.H."/>
            <person name="Ke Z."/>
            <person name="Kennison J.A."/>
            <person name="Ketchum K.A."/>
            <person name="Kimmel B.E."/>
            <person name="Kodira C.D."/>
            <person name="Kraft C.L."/>
            <person name="Kravitz S."/>
            <person name="Kulp D."/>
            <person name="Lai Z."/>
            <person name="Lasko P."/>
            <person name="Lei Y."/>
            <person name="Levitsky A.A."/>
            <person name="Li J.H."/>
            <person name="Li Z."/>
            <person name="Liang Y."/>
            <person name="Lin X."/>
            <person name="Liu X."/>
            <person name="Mattei B."/>
            <person name="McIntosh T.C."/>
            <person name="McLeod M.P."/>
            <person name="McPherson D."/>
            <person name="Merkulov G."/>
            <person name="Milshina N.V."/>
            <person name="Mobarry C."/>
            <person name="Morris J."/>
            <person name="Moshrefi A."/>
            <person name="Mount S.M."/>
            <person name="Moy M."/>
            <person name="Murphy B."/>
            <person name="Murphy L."/>
            <person name="Muzny D.M."/>
            <person name="Nelson D.L."/>
            <person name="Nelson D.R."/>
            <person name="Nelson K.A."/>
            <person name="Nixon K."/>
            <person name="Nusskern D.R."/>
            <person name="Pacleb J.M."/>
            <person name="Palazzolo M."/>
            <person name="Pittman G.S."/>
            <person name="Pan S."/>
            <person name="Pollard J."/>
            <person name="Puri V."/>
            <person name="Reese M.G."/>
            <person name="Reinert K."/>
            <person name="Remington K."/>
            <person name="Saunders R.D.C."/>
            <person name="Scheeler F."/>
            <person name="Shen H."/>
            <person name="Shue B.C."/>
            <person name="Siden-Kiamos I."/>
            <person name="Simpson M."/>
            <person name="Skupski M.P."/>
            <person name="Smith T.J."/>
            <person name="Spier E."/>
            <person name="Spradling A.C."/>
            <person name="Stapleton M."/>
            <person name="Strong R."/>
            <person name="Sun E."/>
            <person name="Svirskas R."/>
            <person name="Tector C."/>
            <person name="Turner R."/>
            <person name="Venter E."/>
            <person name="Wang A.H."/>
            <person name="Wang X."/>
            <person name="Wang Z.-Y."/>
            <person name="Wassarman D.A."/>
            <person name="Weinstock G.M."/>
            <person name="Weissenbach J."/>
            <person name="Williams S.M."/>
            <person name="Woodage T."/>
            <person name="Worley K.C."/>
            <person name="Wu D."/>
            <person name="Yang S."/>
            <person name="Yao Q.A."/>
            <person name="Ye J."/>
            <person name="Yeh R.-F."/>
            <person name="Zaveri J.S."/>
            <person name="Zhan M."/>
            <person name="Zhang G."/>
            <person name="Zhao Q."/>
            <person name="Zheng L."/>
            <person name="Zheng X.H."/>
            <person name="Zhong F.N."/>
            <person name="Zhong W."/>
            <person name="Zhou X."/>
            <person name="Zhu S.C."/>
            <person name="Zhu X."/>
            <person name="Smith H.O."/>
            <person name="Gibbs R.A."/>
            <person name="Myers E.W."/>
            <person name="Rubin G.M."/>
            <person name="Venter J.C."/>
        </authorList>
    </citation>
    <scope>NUCLEOTIDE SEQUENCE [LARGE SCALE GENOMIC DNA]</scope>
    <source>
        <strain>Berkeley</strain>
    </source>
</reference>
<reference key="2">
    <citation type="journal article" date="2002" name="Genome Biol.">
        <title>Annotation of the Drosophila melanogaster euchromatic genome: a systematic review.</title>
        <authorList>
            <person name="Misra S."/>
            <person name="Crosby M.A."/>
            <person name="Mungall C.J."/>
            <person name="Matthews B.B."/>
            <person name="Campbell K.S."/>
            <person name="Hradecky P."/>
            <person name="Huang Y."/>
            <person name="Kaminker J.S."/>
            <person name="Millburn G.H."/>
            <person name="Prochnik S.E."/>
            <person name="Smith C.D."/>
            <person name="Tupy J.L."/>
            <person name="Whitfield E.J."/>
            <person name="Bayraktaroglu L."/>
            <person name="Berman B.P."/>
            <person name="Bettencourt B.R."/>
            <person name="Celniker S.E."/>
            <person name="de Grey A.D.N.J."/>
            <person name="Drysdale R.A."/>
            <person name="Harris N.L."/>
            <person name="Richter J."/>
            <person name="Russo S."/>
            <person name="Schroeder A.J."/>
            <person name="Shu S.Q."/>
            <person name="Stapleton M."/>
            <person name="Yamada C."/>
            <person name="Ashburner M."/>
            <person name="Gelbart W.M."/>
            <person name="Rubin G.M."/>
            <person name="Lewis S.E."/>
        </authorList>
    </citation>
    <scope>GENOME REANNOTATION</scope>
    <source>
        <strain>Berkeley</strain>
    </source>
</reference>
<reference key="3">
    <citation type="submission" date="2003-01" db="EMBL/GenBank/DDBJ databases">
        <authorList>
            <person name="Stapleton M."/>
            <person name="Brokstein P."/>
            <person name="Hong L."/>
            <person name="Agbayani A."/>
            <person name="Carlson J.W."/>
            <person name="Champe M."/>
            <person name="Chavez C."/>
            <person name="Dorsett V."/>
            <person name="Dresnek D."/>
            <person name="Farfan D."/>
            <person name="Frise E."/>
            <person name="George R.A."/>
            <person name="Gonzalez M."/>
            <person name="Guarin H."/>
            <person name="Kronmiller B."/>
            <person name="Li P.W."/>
            <person name="Liao G."/>
            <person name="Miranda A."/>
            <person name="Mungall C.J."/>
            <person name="Nunoo J."/>
            <person name="Pacleb J.M."/>
            <person name="Paragas V."/>
            <person name="Park S."/>
            <person name="Patel S."/>
            <person name="Phouanenavong S."/>
            <person name="Wan K.H."/>
            <person name="Yu C."/>
            <person name="Lewis S.E."/>
            <person name="Rubin G.M."/>
            <person name="Celniker S.E."/>
        </authorList>
    </citation>
    <scope>NUCLEOTIDE SEQUENCE [LARGE SCALE MRNA]</scope>
    <source>
        <strain>Berkeley</strain>
        <tissue>Head</tissue>
    </source>
</reference>
<organism evidence="4">
    <name type="scientific">Drosophila melanogaster</name>
    <name type="common">Fruit fly</name>
    <dbReference type="NCBI Taxonomy" id="7227"/>
    <lineage>
        <taxon>Eukaryota</taxon>
        <taxon>Metazoa</taxon>
        <taxon>Ecdysozoa</taxon>
        <taxon>Arthropoda</taxon>
        <taxon>Hexapoda</taxon>
        <taxon>Insecta</taxon>
        <taxon>Pterygota</taxon>
        <taxon>Neoptera</taxon>
        <taxon>Endopterygota</taxon>
        <taxon>Diptera</taxon>
        <taxon>Brachycera</taxon>
        <taxon>Muscomorpha</taxon>
        <taxon>Ephydroidea</taxon>
        <taxon>Drosophilidae</taxon>
        <taxon>Drosophila</taxon>
        <taxon>Sophophora</taxon>
    </lineage>
</organism>
<comment type="catalytic activity">
    <reaction>
        <text>3-hydroxy-2-methylpropanoate + NAD(+) = 2-methyl-3-oxopropanoate + NADH + H(+)</text>
        <dbReference type="Rhea" id="RHEA:17681"/>
        <dbReference type="ChEBI" id="CHEBI:11805"/>
        <dbReference type="ChEBI" id="CHEBI:15378"/>
        <dbReference type="ChEBI" id="CHEBI:57540"/>
        <dbReference type="ChEBI" id="CHEBI:57700"/>
        <dbReference type="ChEBI" id="CHEBI:57945"/>
        <dbReference type="EC" id="1.1.1.31"/>
    </reaction>
</comment>
<comment type="pathway">
    <text>Amino-acid degradation; L-valine degradation.</text>
</comment>
<comment type="subcellular location">
    <subcellularLocation>
        <location evidence="1">Mitochondrion</location>
    </subcellularLocation>
</comment>
<comment type="similarity">
    <text evidence="2">Belongs to the HIBADH-related family. 3-hydroxyisobutyrate dehydrogenase subfamily.</text>
</comment>
<comment type="sequence caution" evidence="2">
    <conflict type="erroneous initiation">
        <sequence resource="EMBL-CDS" id="AAL39202"/>
    </conflict>
    <text>Extended N-terminus.</text>
</comment>
<gene>
    <name evidence="3" type="primary">Hibadh</name>
    <name evidence="3" type="ORF">CG15093</name>
</gene>
<proteinExistence type="evidence at transcript level"/>
<accession>Q9V8M5</accession>
<accession>A0A0B4JCU8</accession>
<accession>Q0E926</accession>
<accession>Q86R98</accession>
<accession>Q9V8M6</accession>
<evidence type="ECO:0000250" key="1"/>
<evidence type="ECO:0000305" key="2"/>
<evidence type="ECO:0000312" key="3">
    <source>
        <dbReference type="FlyBase" id="FBgn0034390"/>
    </source>
</evidence>
<evidence type="ECO:0000312" key="4">
    <source>
        <dbReference type="Proteomes" id="UP000000803"/>
    </source>
</evidence>
<keyword id="KW-0101">Branched-chain amino acid catabolism</keyword>
<keyword id="KW-0496">Mitochondrion</keyword>
<keyword id="KW-0520">NAD</keyword>
<keyword id="KW-0560">Oxidoreductase</keyword>
<keyword id="KW-1185">Reference proteome</keyword>
<keyword id="KW-0809">Transit peptide</keyword>